<protein>
    <recommendedName>
        <fullName evidence="1">Solute carrier family 22 member 16</fullName>
    </recommendedName>
    <alternativeName>
        <fullName evidence="1">Carnitine transporter 2</fullName>
        <shortName evidence="1">CT2</shortName>
    </alternativeName>
</protein>
<name>S22AG_BOVIN</name>
<evidence type="ECO:0000250" key="1">
    <source>
        <dbReference type="UniProtKB" id="Q86VW1"/>
    </source>
</evidence>
<evidence type="ECO:0000255" key="2"/>
<evidence type="ECO:0000305" key="3"/>
<comment type="function">
    <text evidence="1">Facilitative organic cation transporter that mediates the transport of carnitine as well as the polyamine spermidine. Mediates the partially Na(+)-dependent bidirectional transport of carnitine. May mediate L-carnitine secretion from testis epididymal epithelium into the lumen which is involved in the maturation of spermatozoa.</text>
</comment>
<comment type="catalytic activity">
    <reaction evidence="1">
        <text>(R)-carnitine(in) = (R)-carnitine(out)</text>
        <dbReference type="Rhea" id="RHEA:34959"/>
        <dbReference type="ChEBI" id="CHEBI:16347"/>
    </reaction>
</comment>
<comment type="catalytic activity">
    <reaction evidence="1">
        <text>spermidine(in) = spermidine(out)</text>
        <dbReference type="Rhea" id="RHEA:35039"/>
        <dbReference type="ChEBI" id="CHEBI:57834"/>
    </reaction>
</comment>
<comment type="subcellular location">
    <subcellularLocation>
        <location evidence="1">Cell membrane</location>
        <topology evidence="1">Multi-pass membrane protein</topology>
    </subcellularLocation>
    <text evidence="1">Detected in the plasma membrane of Sertoli cells and in the luminal membrane of epithelial cells in the epididymis.</text>
</comment>
<comment type="similarity">
    <text evidence="3">Belongs to the major facilitator (TC 2.A.1) superfamily. Organic cation transporter (TC 2.A.1.19) family.</text>
</comment>
<comment type="sequence caution" evidence="3">
    <conflict type="frameshift">
        <sequence resource="EMBL-CDS" id="AAI18254"/>
    </conflict>
</comment>
<gene>
    <name type="primary">SLC22A16</name>
</gene>
<organism>
    <name type="scientific">Bos taurus</name>
    <name type="common">Bovine</name>
    <dbReference type="NCBI Taxonomy" id="9913"/>
    <lineage>
        <taxon>Eukaryota</taxon>
        <taxon>Metazoa</taxon>
        <taxon>Chordata</taxon>
        <taxon>Craniata</taxon>
        <taxon>Vertebrata</taxon>
        <taxon>Euteleostomi</taxon>
        <taxon>Mammalia</taxon>
        <taxon>Eutheria</taxon>
        <taxon>Laurasiatheria</taxon>
        <taxon>Artiodactyla</taxon>
        <taxon>Ruminantia</taxon>
        <taxon>Pecora</taxon>
        <taxon>Bovidae</taxon>
        <taxon>Bovinae</taxon>
        <taxon>Bos</taxon>
    </lineage>
</organism>
<proteinExistence type="evidence at transcript level"/>
<accession>Q17QN9</accession>
<sequence>MGSSNLELIFDSVGHFGRYQIFLYFICAFQNISCGIHYLASVFLSVSPQHTCRPPGNVSQVLFQDLSTWQLEDIWTQFSVGREDRILVQLQDGAIWELTSCQRFRRDDQSSLDYEYSGQKSSFPCLDGYIYDRSKWLSTVVTQWDLVCNREWFGRLIQPTFMFGVLLGAVIFGYLSDRAGRRLVLWASSTGVFLFGIAAAFTFDYYSFIVARFLLAISGSGYLVVVFVYVTEFVGMKSRTWASIHLHSFFAFGTMVVALTGYFVRTWWIYQIVLSSVTVPFVLCCWMLPETPFWLISGGKYEEAQKVIDTMAKWNRTRPCKLSEILSLDHDGSAGNKPSQVEKHTLSELFYDWSIGTRTLILWLIWFTGCLGFYTFSLNSVHLGGSEYLNLFLMGVVEIPAYVLVCLGMDRVGRRNILIFSLLSSAVTSGVIMVIPKDYHVWLVVASMAGKFFIGAAFGLIYLYTAELYPTIVRSLAVGSGSTVGRVGSIVAPLCIYLSSVWIFMPQLLVGTLALVSGVLTFLLPETLRRPLTTTWEETEKESSSGKLLSTTSNTVLENVTVENSEDSSLNK</sequence>
<feature type="chain" id="PRO_0000318990" description="Solute carrier family 22 member 16">
    <location>
        <begin position="1"/>
        <end position="572"/>
    </location>
</feature>
<feature type="transmembrane region" description="Helical" evidence="2">
    <location>
        <begin position="21"/>
        <end position="41"/>
    </location>
</feature>
<feature type="transmembrane region" description="Helical" evidence="2">
    <location>
        <begin position="156"/>
        <end position="176"/>
    </location>
</feature>
<feature type="transmembrane region" description="Helical" evidence="2">
    <location>
        <begin position="183"/>
        <end position="203"/>
    </location>
</feature>
<feature type="transmembrane region" description="Helical" evidence="2">
    <location>
        <begin position="208"/>
        <end position="228"/>
    </location>
</feature>
<feature type="transmembrane region" description="Helical" evidence="2">
    <location>
        <begin position="244"/>
        <end position="264"/>
    </location>
</feature>
<feature type="transmembrane region" description="Helical" evidence="2">
    <location>
        <begin position="268"/>
        <end position="288"/>
    </location>
</feature>
<feature type="transmembrane region" description="Helical" evidence="2">
    <location>
        <begin position="359"/>
        <end position="379"/>
    </location>
</feature>
<feature type="transmembrane region" description="Helical" evidence="2">
    <location>
        <begin position="389"/>
        <end position="409"/>
    </location>
</feature>
<feature type="transmembrane region" description="Helical" evidence="2">
    <location>
        <begin position="416"/>
        <end position="436"/>
    </location>
</feature>
<feature type="transmembrane region" description="Helical" evidence="2">
    <location>
        <begin position="441"/>
        <end position="461"/>
    </location>
</feature>
<feature type="transmembrane region" description="Helical" evidence="2">
    <location>
        <begin position="476"/>
        <end position="496"/>
    </location>
</feature>
<feature type="transmembrane region" description="Helical" evidence="2">
    <location>
        <begin position="503"/>
        <end position="523"/>
    </location>
</feature>
<feature type="glycosylation site" description="N-linked (GlcNAc...) asparagine" evidence="2">
    <location>
        <position position="57"/>
    </location>
</feature>
<feature type="glycosylation site" description="N-linked (GlcNAc...) asparagine" evidence="2">
    <location>
        <position position="315"/>
    </location>
</feature>
<feature type="glycosylation site" description="N-linked (GlcNAc...) asparagine" evidence="2">
    <location>
        <position position="559"/>
    </location>
</feature>
<reference key="1">
    <citation type="submission" date="2006-06" db="EMBL/GenBank/DDBJ databases">
        <authorList>
            <consortium name="NIH - Mammalian Gene Collection (MGC) project"/>
        </authorList>
    </citation>
    <scope>NUCLEOTIDE SEQUENCE [LARGE SCALE MRNA]</scope>
    <source>
        <strain>Hereford</strain>
        <tissue>Thalamus</tissue>
    </source>
</reference>
<keyword id="KW-1003">Cell membrane</keyword>
<keyword id="KW-0217">Developmental protein</keyword>
<keyword id="KW-0221">Differentiation</keyword>
<keyword id="KW-0325">Glycoprotein</keyword>
<keyword id="KW-0406">Ion transport</keyword>
<keyword id="KW-0472">Membrane</keyword>
<keyword id="KW-1185">Reference proteome</keyword>
<keyword id="KW-0744">Spermatogenesis</keyword>
<keyword id="KW-0812">Transmembrane</keyword>
<keyword id="KW-1133">Transmembrane helix</keyword>
<keyword id="KW-0813">Transport</keyword>
<dbReference type="EMBL" id="BC118253">
    <property type="protein sequence ID" value="AAI18254.1"/>
    <property type="status" value="ALT_FRAME"/>
    <property type="molecule type" value="mRNA"/>
</dbReference>
<dbReference type="RefSeq" id="NP_001069792.2">
    <property type="nucleotide sequence ID" value="NM_001076324.2"/>
</dbReference>
<dbReference type="SMR" id="Q17QN9"/>
<dbReference type="FunCoup" id="Q17QN9">
    <property type="interactions" value="31"/>
</dbReference>
<dbReference type="STRING" id="9913.ENSBTAP00000062246"/>
<dbReference type="GlyCosmos" id="Q17QN9">
    <property type="glycosylation" value="3 sites, No reported glycans"/>
</dbReference>
<dbReference type="GlyGen" id="Q17QN9">
    <property type="glycosylation" value="3 sites"/>
</dbReference>
<dbReference type="PaxDb" id="9913-ENSBTAP00000028664"/>
<dbReference type="Ensembl" id="ENSBTAT00000028664.5">
    <property type="protein sequence ID" value="ENSBTAP00000028664.3"/>
    <property type="gene ID" value="ENSBTAG00000010507.6"/>
</dbReference>
<dbReference type="GeneID" id="614380"/>
<dbReference type="KEGG" id="bta:614380"/>
<dbReference type="CTD" id="85413"/>
<dbReference type="VEuPathDB" id="HostDB:ENSBTAG00000010507"/>
<dbReference type="VGNC" id="VGNC:34724">
    <property type="gene designation" value="SLC22A16"/>
</dbReference>
<dbReference type="eggNOG" id="KOG0255">
    <property type="taxonomic scope" value="Eukaryota"/>
</dbReference>
<dbReference type="GeneTree" id="ENSGT00940000160723"/>
<dbReference type="HOGENOM" id="CLU_001265_33_4_1"/>
<dbReference type="InParanoid" id="Q17QN9"/>
<dbReference type="OMA" id="MEAYMGA"/>
<dbReference type="OrthoDB" id="2261376at2759"/>
<dbReference type="TreeFam" id="TF315847"/>
<dbReference type="Reactome" id="R-BTA-549127">
    <property type="pathway name" value="Organic cation transport"/>
</dbReference>
<dbReference type="Proteomes" id="UP000009136">
    <property type="component" value="Chromosome 9"/>
</dbReference>
<dbReference type="Bgee" id="ENSBTAG00000010507">
    <property type="expression patterns" value="Expressed in mammary gland and 101 other cell types or tissues"/>
</dbReference>
<dbReference type="GO" id="GO:0005829">
    <property type="term" value="C:cytosol"/>
    <property type="evidence" value="ECO:0007669"/>
    <property type="project" value="Ensembl"/>
</dbReference>
<dbReference type="GO" id="GO:0005886">
    <property type="term" value="C:plasma membrane"/>
    <property type="evidence" value="ECO:0000250"/>
    <property type="project" value="UniProtKB"/>
</dbReference>
<dbReference type="GO" id="GO:0005275">
    <property type="term" value="F:amine transmembrane transporter activity"/>
    <property type="evidence" value="ECO:0007669"/>
    <property type="project" value="Ensembl"/>
</dbReference>
<dbReference type="GO" id="GO:0015226">
    <property type="term" value="F:carnitine transmembrane transporter activity"/>
    <property type="evidence" value="ECO:0000250"/>
    <property type="project" value="UniProtKB"/>
</dbReference>
<dbReference type="GO" id="GO:0015101">
    <property type="term" value="F:organic cation transmembrane transporter activity"/>
    <property type="evidence" value="ECO:0000250"/>
    <property type="project" value="UniProtKB"/>
</dbReference>
<dbReference type="GO" id="GO:0015606">
    <property type="term" value="F:spermidine transmembrane transporter activity"/>
    <property type="evidence" value="ECO:0000250"/>
    <property type="project" value="UniProtKB"/>
</dbReference>
<dbReference type="GO" id="GO:0046717">
    <property type="term" value="P:acid secretion"/>
    <property type="evidence" value="ECO:0007669"/>
    <property type="project" value="Ensembl"/>
</dbReference>
<dbReference type="GO" id="GO:1902603">
    <property type="term" value="P:carnitine transmembrane transport"/>
    <property type="evidence" value="ECO:0000250"/>
    <property type="project" value="UniProtKB"/>
</dbReference>
<dbReference type="GO" id="GO:0030154">
    <property type="term" value="P:cell differentiation"/>
    <property type="evidence" value="ECO:0007669"/>
    <property type="project" value="UniProtKB-KW"/>
</dbReference>
<dbReference type="GO" id="GO:0030317">
    <property type="term" value="P:flagellated sperm motility"/>
    <property type="evidence" value="ECO:0007669"/>
    <property type="project" value="Ensembl"/>
</dbReference>
<dbReference type="GO" id="GO:0006811">
    <property type="term" value="P:monoatomic ion transport"/>
    <property type="evidence" value="ECO:0007669"/>
    <property type="project" value="UniProtKB-KW"/>
</dbReference>
<dbReference type="GO" id="GO:0015695">
    <property type="term" value="P:organic cation transport"/>
    <property type="evidence" value="ECO:0000250"/>
    <property type="project" value="UniProtKB"/>
</dbReference>
<dbReference type="GO" id="GO:0007338">
    <property type="term" value="P:single fertilization"/>
    <property type="evidence" value="ECO:0007669"/>
    <property type="project" value="Ensembl"/>
</dbReference>
<dbReference type="GO" id="GO:0007283">
    <property type="term" value="P:spermatogenesis"/>
    <property type="evidence" value="ECO:0007669"/>
    <property type="project" value="UniProtKB-KW"/>
</dbReference>
<dbReference type="GO" id="GO:1903711">
    <property type="term" value="P:spermidine transmembrane transport"/>
    <property type="evidence" value="ECO:0000250"/>
    <property type="project" value="UniProtKB"/>
</dbReference>
<dbReference type="FunFam" id="1.20.1250.20:FF:000154">
    <property type="entry name" value="Solute carrier family 22 member 16"/>
    <property type="match status" value="1"/>
</dbReference>
<dbReference type="Gene3D" id="1.20.1250.20">
    <property type="entry name" value="MFS general substrate transporter like domains"/>
    <property type="match status" value="1"/>
</dbReference>
<dbReference type="InterPro" id="IPR020846">
    <property type="entry name" value="MFS_dom"/>
</dbReference>
<dbReference type="InterPro" id="IPR005828">
    <property type="entry name" value="MFS_sugar_transport-like"/>
</dbReference>
<dbReference type="InterPro" id="IPR036259">
    <property type="entry name" value="MFS_trans_sf"/>
</dbReference>
<dbReference type="PANTHER" id="PTHR24064">
    <property type="entry name" value="SOLUTE CARRIER FAMILY 22 MEMBER"/>
    <property type="match status" value="1"/>
</dbReference>
<dbReference type="Pfam" id="PF00083">
    <property type="entry name" value="Sugar_tr"/>
    <property type="match status" value="1"/>
</dbReference>
<dbReference type="SUPFAM" id="SSF103473">
    <property type="entry name" value="MFS general substrate transporter"/>
    <property type="match status" value="1"/>
</dbReference>
<dbReference type="PROSITE" id="PS50850">
    <property type="entry name" value="MFS"/>
    <property type="match status" value="1"/>
</dbReference>